<evidence type="ECO:0000250" key="1">
    <source>
        <dbReference type="UniProtKB" id="Q5PQS0"/>
    </source>
</evidence>
<evidence type="ECO:0000250" key="2">
    <source>
        <dbReference type="UniProtKB" id="Q7TSI1"/>
    </source>
</evidence>
<evidence type="ECO:0000255" key="3">
    <source>
        <dbReference type="PROSITE-ProRule" id="PRU00145"/>
    </source>
</evidence>
<evidence type="ECO:0000255" key="4">
    <source>
        <dbReference type="PROSITE-ProRule" id="PRU00178"/>
    </source>
</evidence>
<evidence type="ECO:0000255" key="5">
    <source>
        <dbReference type="PROSITE-ProRule" id="PRU00226"/>
    </source>
</evidence>
<evidence type="ECO:0000256" key="6">
    <source>
        <dbReference type="SAM" id="MobiDB-lite"/>
    </source>
</evidence>
<evidence type="ECO:0000269" key="7">
    <source>
    </source>
</evidence>
<evidence type="ECO:0000269" key="8">
    <source>
    </source>
</evidence>
<evidence type="ECO:0000269" key="9">
    <source>
    </source>
</evidence>
<evidence type="ECO:0000269" key="10">
    <source>
    </source>
</evidence>
<evidence type="ECO:0000269" key="11">
    <source>
    </source>
</evidence>
<evidence type="ECO:0000269" key="12">
    <source>
    </source>
</evidence>
<evidence type="ECO:0000269" key="13">
    <source>
    </source>
</evidence>
<evidence type="ECO:0000269" key="14">
    <source>
    </source>
</evidence>
<evidence type="ECO:0000269" key="15">
    <source>
    </source>
</evidence>
<evidence type="ECO:0000305" key="16"/>
<evidence type="ECO:0000312" key="17">
    <source>
        <dbReference type="HGNC" id="HGNC:29017"/>
    </source>
</evidence>
<evidence type="ECO:0007744" key="18">
    <source>
    </source>
</evidence>
<evidence type="ECO:0007829" key="19">
    <source>
        <dbReference type="PDB" id="5DPW"/>
    </source>
</evidence>
<reference key="1">
    <citation type="journal article" date="1997" name="DNA Res.">
        <title>Prediction of the coding sequences of unidentified human genes. VII. The complete sequences of 100 new cDNA clones from brain which can code for large proteins in vitro.</title>
        <authorList>
            <person name="Nagase T."/>
            <person name="Ishikawa K."/>
            <person name="Nakajima D."/>
            <person name="Ohira M."/>
            <person name="Seki N."/>
            <person name="Miyajima N."/>
            <person name="Tanaka A."/>
            <person name="Kotani H."/>
            <person name="Nomura N."/>
            <person name="Ohara O."/>
        </authorList>
    </citation>
    <scope>NUCLEOTIDE SEQUENCE [LARGE SCALE MRNA]</scope>
    <scope>TISSUE SPECIFICITY</scope>
    <source>
        <tissue>Brain</tissue>
    </source>
</reference>
<reference key="2">
    <citation type="journal article" date="2004" name="Genome Res.">
        <title>The status, quality, and expansion of the NIH full-length cDNA project: the Mammalian Gene Collection (MGC).</title>
        <authorList>
            <consortium name="The MGC Project Team"/>
        </authorList>
    </citation>
    <scope>NUCLEOTIDE SEQUENCE [LARGE SCALE MRNA]</scope>
    <source>
        <tissue>Uterus</tissue>
    </source>
</reference>
<reference key="3">
    <citation type="journal article" date="2001" name="Glycoconj. J.">
        <title>Novel adapter protein AP162 connects a sialyl-Le(x)-positive mucin with an apoptotic signal transduction pathway.</title>
        <authorList>
            <person name="Hartel-Schenk S."/>
            <person name="Gratchev A."/>
            <person name="Hanski M.-L."/>
            <person name="Ogorek D."/>
            <person name="Trendelenburg G."/>
            <person name="Hummel M."/>
            <person name="Hoepfner M."/>
            <person name="Scheruebl H."/>
            <person name="Zeitz M."/>
            <person name="Hanski C."/>
        </authorList>
    </citation>
    <scope>NUCLEOTIDE SEQUENCE [MRNA] OF 82-1056</scope>
    <scope>TISSUE SPECIFICITY</scope>
    <scope>FUNCTION</scope>
    <scope>INTERACTION WITH SIALYL-LEX POSITIVE MUCIN</scope>
    <source>
        <tissue>Colon carcinoma</tissue>
    </source>
</reference>
<reference key="4">
    <citation type="submission" date="2002-01" db="EMBL/GenBank/DDBJ databases">
        <title>The nucleotide sequence of a long cDNA clone isolated from human spleen.</title>
        <authorList>
            <person name="Jikuya H."/>
            <person name="Takano J."/>
            <person name="Nomura N."/>
            <person name="Kikuno R."/>
            <person name="Nagase T."/>
            <person name="Ohara O."/>
        </authorList>
    </citation>
    <scope>NUCLEOTIDE SEQUENCE [LARGE SCALE MRNA] OF 425-1056</scope>
    <source>
        <tissue>Spleen</tissue>
    </source>
</reference>
<reference key="5">
    <citation type="submission" date="2000-07" db="EMBL/GenBank/DDBJ databases">
        <authorList>
            <consortium name="The European IMAGE consortium"/>
        </authorList>
    </citation>
    <scope>NUCLEOTIDE SEQUENCE [LARGE SCALE MRNA] OF 528-832</scope>
</reference>
<reference key="6">
    <citation type="journal article" date="2010" name="Mol. Biol. Cell">
        <title>Rubicon and PLEKHM1 negatively regulate the endocytic/autophagic pathway via a novel Rab7-binding domain.</title>
        <authorList>
            <person name="Tabata K."/>
            <person name="Matsunaga K."/>
            <person name="Sakane A."/>
            <person name="Sasaki T."/>
            <person name="Noda T."/>
            <person name="Yoshimori T."/>
        </authorList>
    </citation>
    <scope>FUNCTION</scope>
    <scope>INTERACTION WITH RAB7</scope>
    <scope>SUBCELLULAR LOCATION</scope>
    <scope>MUTAGENESIS OF CYS-1021; CYS-1024; HIS-1029 AND CYS-1032</scope>
</reference>
<reference key="7">
    <citation type="journal article" date="2010" name="Sci. Signal.">
        <title>Quantitative phosphoproteomics reveals widespread full phosphorylation site occupancy during mitosis.</title>
        <authorList>
            <person name="Olsen J.V."/>
            <person name="Vermeulen M."/>
            <person name="Santamaria A."/>
            <person name="Kumar C."/>
            <person name="Miller M.L."/>
            <person name="Jensen L.J."/>
            <person name="Gnad F."/>
            <person name="Cox J."/>
            <person name="Jensen T.S."/>
            <person name="Nigg E.A."/>
            <person name="Brunak S."/>
            <person name="Mann M."/>
        </authorList>
    </citation>
    <scope>IDENTIFICATION BY MASS SPECTROMETRY [LARGE SCALE ANALYSIS]</scope>
    <source>
        <tissue>Cervix carcinoma</tissue>
    </source>
</reference>
<reference key="8">
    <citation type="journal article" date="2013" name="J. Proteome Res.">
        <title>Toward a comprehensive characterization of a human cancer cell phosphoproteome.</title>
        <authorList>
            <person name="Zhou H."/>
            <person name="Di Palma S."/>
            <person name="Preisinger C."/>
            <person name="Peng M."/>
            <person name="Polat A.N."/>
            <person name="Heck A.J."/>
            <person name="Mohammed S."/>
        </authorList>
    </citation>
    <scope>PHOSPHORYLATION [LARGE SCALE ANALYSIS] AT SER-432</scope>
    <scope>IDENTIFICATION BY MASS SPECTROMETRY [LARGE SCALE ANALYSIS]</scope>
    <source>
        <tissue>Cervix carcinoma</tissue>
        <tissue>Erythroleukemia</tissue>
    </source>
</reference>
<reference key="9">
    <citation type="journal article" date="2015" name="Cell Host Microbe">
        <title>PLEKHM1 regulates Salmonella-containing vacuole biogenesis and infection.</title>
        <authorList>
            <person name="McEwan D.G."/>
            <person name="Richter B."/>
            <person name="Claudi B."/>
            <person name="Wigge C."/>
            <person name="Wild P."/>
            <person name="Farhan H."/>
            <person name="McGourty K."/>
            <person name="Coxon F.P."/>
            <person name="Franz-Wachtel M."/>
            <person name="Perdu B."/>
            <person name="Akutsu M."/>
            <person name="Habermann A."/>
            <person name="Kirchof A."/>
            <person name="Helfrich M.H."/>
            <person name="Odgren P.R."/>
            <person name="Van Hul W."/>
            <person name="Frangakis A.S."/>
            <person name="Rajalingam K."/>
            <person name="Macek B."/>
            <person name="Holden D.W."/>
            <person name="Bumann D."/>
            <person name="Dikic I."/>
        </authorList>
    </citation>
    <scope>FUNCTION (MICROBIAL INFECTION)</scope>
    <scope>INTERACTION WITH RAB7A; VPS41 AND S.TYPHIMURIUM SIFA</scope>
    <scope>SUBCELLULAR LOCATION</scope>
    <scope>MUTAGENESIS OF 720-LYS--LEU-722; GLU-729 AND ARG-769</scope>
</reference>
<reference key="10">
    <citation type="journal article" date="2015" name="Mol. Cell">
        <title>PLEKHM1 regulates autophagosome-lysosome fusion through HOPS complex and LC3/GABARAP proteins.</title>
        <authorList>
            <person name="McEwan D.G."/>
            <person name="Popovic D."/>
            <person name="Gubas A."/>
            <person name="Terawaki S."/>
            <person name="Suzuki H."/>
            <person name="Stadel D."/>
            <person name="Coxon F.P."/>
            <person name="Miranda de Stegmann D."/>
            <person name="Bhogaraju S."/>
            <person name="Maddi K."/>
            <person name="Kirchof A."/>
            <person name="Gatti E."/>
            <person name="Helfrich M.H."/>
            <person name="Wakatsuki S."/>
            <person name="Behrends C."/>
            <person name="Pierre P."/>
            <person name="Dikic I."/>
        </authorList>
    </citation>
    <scope>FUNCTION</scope>
    <scope>INTERACTION WITH VPS41; VPS11; VPS39; GABARAP; GABARAPL; GABARAPL2; MAP1LC3A; MAP1LC3B AND MAP1LC3C</scope>
    <scope>SUBUNIT</scope>
    <scope>SUBCELLULAR LOCATION</scope>
    <scope>DOMAIN</scope>
</reference>
<reference key="11">
    <citation type="journal article" date="2017" name="J. Cell Biol.">
        <title>The Rab7 effector PLEKHM1 binds Arl8b to promote cargo traffic to lysosomes.</title>
        <authorList>
            <person name="Marwaha R."/>
            <person name="Arya S.B."/>
            <person name="Jagga D."/>
            <person name="Kaur H."/>
            <person name="Tuli A."/>
            <person name="Sharma M."/>
        </authorList>
    </citation>
    <scope>FUNCTION</scope>
    <scope>INTERACTION WITH ARL8A; ARL8B; RAB7A; VPS41; VPS11; VPS18 AND VPS33A</scope>
    <scope>SUBCELLULAR LOCATION</scope>
    <scope>MUTAGENESIS OF HIS-60; HIS-63 AND 119-ARG--ARG-123</scope>
</reference>
<reference key="12">
    <citation type="journal article" date="2007" name="J. Clin. Invest.">
        <title>Involvement of PLEKHM1 in osteoclastic vesicular transport and osteopetrosis in incisors absent rats and humans.</title>
        <authorList>
            <person name="van Wesenbeeck L."/>
            <person name="Odgren P.R."/>
            <person name="Coxon F.P."/>
            <person name="Frattini A."/>
            <person name="Moens P."/>
            <person name="Perdu B."/>
            <person name="MacKay C.A."/>
            <person name="Van Hul E."/>
            <person name="Timmermanns J.-P."/>
            <person name="Vanhoenacker F."/>
            <person name="Jacobs R."/>
            <person name="Peruzzi B."/>
            <person name="Teti A."/>
            <person name="Helfrich M.H."/>
            <person name="Rogers M.J."/>
            <person name="Villa A."/>
            <person name="Van Hul W."/>
        </authorList>
    </citation>
    <scope>INVOLVEMENT IN OPTB6</scope>
</reference>
<reference key="13">
    <citation type="journal article" date="2008" name="J. Bone Miner. Res.">
        <title>A new heterozygous mutation (R714C) of the osteopetrosis gene, pleckstrin homolog domain containing family M (with run domain) member 1 (PLEKHM1), impairs vesicular acidification and increases TRACP secretion in osteoclasts.</title>
        <authorList>
            <person name="Del Fattore A."/>
            <person name="Fornari R."/>
            <person name="Van Wesenbeeck L."/>
            <person name="de Freitas F."/>
            <person name="Timmermans J.P."/>
            <person name="Peruzzi B."/>
            <person name="Cappariello A."/>
            <person name="Rucci N."/>
            <person name="Spera G."/>
            <person name="Helfrich M.H."/>
            <person name="Van Hul W."/>
            <person name="Migliaccio S."/>
            <person name="Teti A."/>
        </authorList>
    </citation>
    <scope>INVOLVEMENT IN OPTA3</scope>
    <scope>VARIANT OPTA3 CYS-714</scope>
</reference>
<reference key="14">
    <citation type="journal article" date="2016" name="J. Bone Miner. Res.">
        <title>Characterization of a Relatively Malignant Form of Osteopetrosis Caused by a Novel Mutation in the PLEKHM1 Gene.</title>
        <authorList>
            <person name="Bo T."/>
            <person name="Yan F."/>
            <person name="Guo J."/>
            <person name="Lin X."/>
            <person name="Zhang H."/>
            <person name="Guan Q."/>
            <person name="Wang H."/>
            <person name="Fang L."/>
            <person name="Gao L."/>
            <person name="Zhao J."/>
            <person name="Xu C."/>
        </authorList>
    </citation>
    <scope>INVOLVEMENT IN OPTA3</scope>
</reference>
<accession>Q9Y4G2</accession>
<accession>Q6P2R5</accession>
<accession>Q8TEL9</accession>
<accession>Q9NPP5</accession>
<accession>Q9NYA0</accession>
<protein>
    <recommendedName>
        <fullName evidence="16">Pleckstrin homology domain-containing family M member 1</fullName>
        <shortName>PH domain-containing family M member 1</shortName>
    </recommendedName>
    <alternativeName>
        <fullName>162 kDa adapter protein</fullName>
        <shortName>AP162</shortName>
    </alternativeName>
</protein>
<organism>
    <name type="scientific">Homo sapiens</name>
    <name type="common">Human</name>
    <dbReference type="NCBI Taxonomy" id="9606"/>
    <lineage>
        <taxon>Eukaryota</taxon>
        <taxon>Metazoa</taxon>
        <taxon>Chordata</taxon>
        <taxon>Craniata</taxon>
        <taxon>Vertebrata</taxon>
        <taxon>Euteleostomi</taxon>
        <taxon>Mammalia</taxon>
        <taxon>Eutheria</taxon>
        <taxon>Euarchontoglires</taxon>
        <taxon>Primates</taxon>
        <taxon>Haplorrhini</taxon>
        <taxon>Catarrhini</taxon>
        <taxon>Hominidae</taxon>
        <taxon>Homo</taxon>
    </lineage>
</organism>
<sequence>MLSVVENGLDPQAAIPVIKKKLVGSVKALQKQYVSLDTVVTSEDGDANTMCSALEAVFIHGLHAKHIRAEAGGKRKKSAHQKPLPQPVFWPLLKAVTHKHIISELEHLTFVNTDVGRCRAWLRLALNDGLMECYLKLLLQEQARLHEYYQPTALLRDAEEGEFLLSFLQGLTSLSFELSYKSAILNEWTLTPLALSGLCPLSELDPLSTSGAELQRKESLDSISHSSGSEDIEVHHSGHKIRRNQKLTASSLSLDTASSSQLSCSLNSDSCLLQENGSKSPDHCEEPMSCDSDLGTANAEDSDRSLQEVLLEFSKAQVNSVPTNGLSQETEIPTPQASLSLHGLNTSTYLHCEAPAEPLPAQAASGTQDGVHVQEPRPQAPSPLDLQQPVESTSGQQPSSTVSETAREVGQGNGLQKAQAHDGAGLKLVVSSPTSPKNKSWISEDDFYRPSREQPLESASDHPIASYRGTPGSRPGLHRHFSQEPRKNCSLGALDQACVPSPGRRQAQAAPSQGHKSFRVVHRRQMGLSNPFRGLMKLGTVERRGAMGIWKELFCELSPLEFRLYLSNEEHTCVENCSLLRCESVGPAHSDGRFELVFSGKKLALRASSQDEAEDWLDRVREALQKVRPQQEDEWVNVQYPDQPEEPPEAPQGCLSPSDLLSEPAALQGTQFDWSSAQVPEPDAIKESLLYLYMDRTWMPYIFSLSLEALKCFRIRNNEKMLSDSHGVETIRDILPDTSLGGPSFFKIITAKAVLKLQAGNAEEAALWRDLVRKVLASYLETAEEAVTLGGSLDENCQEVLKFATRENGFLLQYLVAIPMEKGLDSQGCFCAGCSRQIGFSFVRPKLCAFSGLYYCDICHQDDASVIPARIIHNWDLTKRPICRQALKFLTQIRAQPLINLQMVNASLYEHVERMHLIGRRREQLKLLGDYLGLCRSGALKELSKRLNHRNYLLESPHRFSVADLQQIADGVYEGFLKALIEFASQHVYHCDLCTQRGFICQICQHHDIIFPFEFDTTVRCAECKTVFHQSCQAVVKKGCPRCARRRKYQEQNIFA</sequence>
<dbReference type="EMBL" id="AB002354">
    <property type="protein sequence ID" value="BAA20813.2"/>
    <property type="status" value="ALT_INIT"/>
    <property type="molecule type" value="mRNA"/>
</dbReference>
<dbReference type="EMBL" id="BC064361">
    <property type="protein sequence ID" value="AAH64361.1"/>
    <property type="molecule type" value="mRNA"/>
</dbReference>
<dbReference type="EMBL" id="AJ002220">
    <property type="protein sequence ID" value="CAB91652.1"/>
    <property type="status" value="ALT_INIT"/>
    <property type="molecule type" value="mRNA"/>
</dbReference>
<dbReference type="EMBL" id="AK074103">
    <property type="protein sequence ID" value="BAB84929.1"/>
    <property type="molecule type" value="mRNA"/>
</dbReference>
<dbReference type="EMBL" id="AL389948">
    <property type="protein sequence ID" value="CAB97526.1"/>
    <property type="molecule type" value="mRNA"/>
</dbReference>
<dbReference type="CCDS" id="CCDS32671.1"/>
<dbReference type="RefSeq" id="NP_055613.1">
    <property type="nucleotide sequence ID" value="NM_014798.3"/>
</dbReference>
<dbReference type="RefSeq" id="XP_006722264.1">
    <property type="nucleotide sequence ID" value="XM_006722201.3"/>
</dbReference>
<dbReference type="RefSeq" id="XP_011523825.1">
    <property type="nucleotide sequence ID" value="XM_011525523.2"/>
</dbReference>
<dbReference type="RefSeq" id="XP_011523826.1">
    <property type="nucleotide sequence ID" value="XM_011525524.1"/>
</dbReference>
<dbReference type="RefSeq" id="XP_016880940.1">
    <property type="nucleotide sequence ID" value="XM_017025451.2"/>
</dbReference>
<dbReference type="RefSeq" id="XP_016880942.1">
    <property type="nucleotide sequence ID" value="XM_017025453.1"/>
</dbReference>
<dbReference type="RefSeq" id="XP_047293144.1">
    <property type="nucleotide sequence ID" value="XM_047437188.1"/>
</dbReference>
<dbReference type="RefSeq" id="XP_054174001.1">
    <property type="nucleotide sequence ID" value="XM_054318026.1"/>
</dbReference>
<dbReference type="RefSeq" id="XP_054184554.1">
    <property type="nucleotide sequence ID" value="XM_054328579.1"/>
</dbReference>
<dbReference type="RefSeq" id="XP_054186103.1">
    <property type="nucleotide sequence ID" value="XM_054330128.1"/>
</dbReference>
<dbReference type="PDB" id="5DPR">
    <property type="method" value="X-ray"/>
    <property type="resolution" value="2.50 A"/>
    <property type="chains" value="A/B/C/D=627-638"/>
</dbReference>
<dbReference type="PDB" id="5DPS">
    <property type="method" value="X-ray"/>
    <property type="resolution" value="2.00 A"/>
    <property type="chains" value="A/B/C=627-638"/>
</dbReference>
<dbReference type="PDB" id="5DPT">
    <property type="method" value="X-ray"/>
    <property type="resolution" value="2.90 A"/>
    <property type="chains" value="A/B=627-638"/>
</dbReference>
<dbReference type="PDB" id="5DPW">
    <property type="method" value="X-ray"/>
    <property type="resolution" value="2.19 A"/>
    <property type="chains" value="B/D/F/H/J/L/N/P=629-642"/>
</dbReference>
<dbReference type="PDB" id="8JC5">
    <property type="method" value="X-ray"/>
    <property type="resolution" value="2.01 A"/>
    <property type="chains" value="C/D=10-205"/>
</dbReference>
<dbReference type="PDBsum" id="5DPR"/>
<dbReference type="PDBsum" id="5DPS"/>
<dbReference type="PDBsum" id="5DPT"/>
<dbReference type="PDBsum" id="5DPW"/>
<dbReference type="PDBsum" id="8JC5"/>
<dbReference type="SMR" id="Q9Y4G2"/>
<dbReference type="BioGRID" id="115178">
    <property type="interactions" value="57"/>
</dbReference>
<dbReference type="FunCoup" id="Q9Y4G2">
    <property type="interactions" value="2466"/>
</dbReference>
<dbReference type="IntAct" id="Q9Y4G2">
    <property type="interactions" value="50"/>
</dbReference>
<dbReference type="MINT" id="Q9Y4G2"/>
<dbReference type="STRING" id="9606.ENSP00000389913"/>
<dbReference type="GlyCosmos" id="Q9Y4G2">
    <property type="glycosylation" value="2 sites, 1 glycan"/>
</dbReference>
<dbReference type="GlyGen" id="Q9Y4G2">
    <property type="glycosylation" value="3 sites, 1 O-linked glycan (2 sites)"/>
</dbReference>
<dbReference type="iPTMnet" id="Q9Y4G2"/>
<dbReference type="PhosphoSitePlus" id="Q9Y4G2"/>
<dbReference type="BioMuta" id="PLEKHM1"/>
<dbReference type="DMDM" id="160419247"/>
<dbReference type="jPOST" id="Q9Y4G2"/>
<dbReference type="MassIVE" id="Q9Y4G2"/>
<dbReference type="PaxDb" id="9606-ENSP00000389913"/>
<dbReference type="PeptideAtlas" id="Q9Y4G2"/>
<dbReference type="ProteomicsDB" id="86202"/>
<dbReference type="Pumba" id="Q9Y4G2"/>
<dbReference type="Antibodypedia" id="30012">
    <property type="antibodies" value="143 antibodies from 27 providers"/>
</dbReference>
<dbReference type="DNASU" id="9842"/>
<dbReference type="Ensembl" id="ENST00000430334.8">
    <property type="protein sequence ID" value="ENSP00000389913.3"/>
    <property type="gene ID" value="ENSG00000225190.12"/>
</dbReference>
<dbReference type="Ensembl" id="ENST00000446609.7">
    <property type="protein sequence ID" value="ENSP00000394344.3"/>
    <property type="gene ID" value="ENSG00000225190.12"/>
</dbReference>
<dbReference type="Ensembl" id="ENST00000613787.3">
    <property type="protein sequence ID" value="ENSP00000479066.1"/>
    <property type="gene ID" value="ENSG00000277111.3"/>
</dbReference>
<dbReference type="Ensembl" id="ENST00000617688.2">
    <property type="protein sequence ID" value="ENSP00000483820.1"/>
    <property type="gene ID" value="ENSG00000276358.2"/>
</dbReference>
<dbReference type="GeneID" id="9842"/>
<dbReference type="KEGG" id="hsa:9842"/>
<dbReference type="MANE-Select" id="ENST00000430334.8">
    <property type="protein sequence ID" value="ENSP00000389913.3"/>
    <property type="RefSeq nucleotide sequence ID" value="NM_014798.3"/>
    <property type="RefSeq protein sequence ID" value="NP_055613.1"/>
</dbReference>
<dbReference type="UCSC" id="uc002ija.4">
    <property type="organism name" value="human"/>
</dbReference>
<dbReference type="AGR" id="HGNC:29017"/>
<dbReference type="CTD" id="9842"/>
<dbReference type="DisGeNET" id="9842"/>
<dbReference type="GeneCards" id="PLEKHM1"/>
<dbReference type="HGNC" id="HGNC:29017">
    <property type="gene designation" value="PLEKHM1"/>
</dbReference>
<dbReference type="HPA" id="ENSG00000225190">
    <property type="expression patterns" value="Tissue enhanced (esophagus)"/>
</dbReference>
<dbReference type="MalaCards" id="PLEKHM1"/>
<dbReference type="MIM" id="611466">
    <property type="type" value="gene"/>
</dbReference>
<dbReference type="MIM" id="611497">
    <property type="type" value="phenotype"/>
</dbReference>
<dbReference type="MIM" id="618107">
    <property type="type" value="phenotype"/>
</dbReference>
<dbReference type="neXtProt" id="NX_Q9Y4G2"/>
<dbReference type="OpenTargets" id="ENSG00000225190"/>
<dbReference type="Orphanet" id="210110">
    <property type="disease" value="Intermediate osteopetrosis"/>
</dbReference>
<dbReference type="PharmGKB" id="PA134906881"/>
<dbReference type="VEuPathDB" id="HostDB:ENSG00000225190"/>
<dbReference type="eggNOG" id="KOG1829">
    <property type="taxonomic scope" value="Eukaryota"/>
</dbReference>
<dbReference type="GeneTree" id="ENSGT00940000155111"/>
<dbReference type="HOGENOM" id="CLU_011318_0_0_1"/>
<dbReference type="InParanoid" id="Q9Y4G2"/>
<dbReference type="OMA" id="IWRDYYC"/>
<dbReference type="OrthoDB" id="62364at2759"/>
<dbReference type="PAN-GO" id="Q9Y4G2">
    <property type="GO annotations" value="0 GO annotations based on evolutionary models"/>
</dbReference>
<dbReference type="PhylomeDB" id="Q9Y4G2"/>
<dbReference type="TreeFam" id="TF317067"/>
<dbReference type="PathwayCommons" id="Q9Y4G2"/>
<dbReference type="SignaLink" id="Q9Y4G2"/>
<dbReference type="BioGRID-ORCS" id="9842">
    <property type="hits" value="58 hits in 1153 CRISPR screens"/>
</dbReference>
<dbReference type="ChiTaRS" id="PLEKHM1">
    <property type="organism name" value="human"/>
</dbReference>
<dbReference type="GeneWiki" id="PLEKHM1"/>
<dbReference type="GenomeRNAi" id="9842"/>
<dbReference type="Pharos" id="Q9Y4G2">
    <property type="development level" value="Tbio"/>
</dbReference>
<dbReference type="PRO" id="PR:Q9Y4G2"/>
<dbReference type="Proteomes" id="UP000005640">
    <property type="component" value="Chromosome 17"/>
</dbReference>
<dbReference type="RNAct" id="Q9Y4G2">
    <property type="molecule type" value="protein"/>
</dbReference>
<dbReference type="Bgee" id="ENSG00000225190">
    <property type="expression patterns" value="Expressed in lower esophagus mucosa and 95 other cell types or tissues"/>
</dbReference>
<dbReference type="ExpressionAtlas" id="Q9Y4G2">
    <property type="expression patterns" value="baseline and differential"/>
</dbReference>
<dbReference type="GO" id="GO:0044754">
    <property type="term" value="C:autolysosome"/>
    <property type="evidence" value="ECO:0000314"/>
    <property type="project" value="UniProtKB"/>
</dbReference>
<dbReference type="GO" id="GO:0120281">
    <property type="term" value="C:autolysosome membrane"/>
    <property type="evidence" value="ECO:0007669"/>
    <property type="project" value="UniProtKB-SubCell"/>
</dbReference>
<dbReference type="GO" id="GO:0043231">
    <property type="term" value="C:intracellular membrane-bounded organelle"/>
    <property type="evidence" value="ECO:0000314"/>
    <property type="project" value="HPA"/>
</dbReference>
<dbReference type="GO" id="GO:0031902">
    <property type="term" value="C:late endosome membrane"/>
    <property type="evidence" value="ECO:0007669"/>
    <property type="project" value="UniProtKB-SubCell"/>
</dbReference>
<dbReference type="GO" id="GO:0005764">
    <property type="term" value="C:lysosome"/>
    <property type="evidence" value="ECO:0000314"/>
    <property type="project" value="UniProtKB"/>
</dbReference>
<dbReference type="GO" id="GO:0005730">
    <property type="term" value="C:nucleolus"/>
    <property type="evidence" value="ECO:0000314"/>
    <property type="project" value="HPA"/>
</dbReference>
<dbReference type="GO" id="GO:0005654">
    <property type="term" value="C:nucleoplasm"/>
    <property type="evidence" value="ECO:0000314"/>
    <property type="project" value="HPA"/>
</dbReference>
<dbReference type="GO" id="GO:0008270">
    <property type="term" value="F:zinc ion binding"/>
    <property type="evidence" value="ECO:0007669"/>
    <property type="project" value="UniProtKB-KW"/>
</dbReference>
<dbReference type="GO" id="GO:0061909">
    <property type="term" value="P:autophagosome-lysosome fusion"/>
    <property type="evidence" value="ECO:0000315"/>
    <property type="project" value="UniProtKB"/>
</dbReference>
<dbReference type="GO" id="GO:1902774">
    <property type="term" value="P:late endosome to lysosome transport"/>
    <property type="evidence" value="ECO:0000315"/>
    <property type="project" value="UniProtKB"/>
</dbReference>
<dbReference type="GO" id="GO:0032418">
    <property type="term" value="P:lysosome localization"/>
    <property type="evidence" value="ECO:0000314"/>
    <property type="project" value="UniProtKB"/>
</dbReference>
<dbReference type="GO" id="GO:0045780">
    <property type="term" value="P:positive regulation of bone resorption"/>
    <property type="evidence" value="ECO:0000250"/>
    <property type="project" value="UniProtKB"/>
</dbReference>
<dbReference type="GO" id="GO:1900029">
    <property type="term" value="P:positive regulation of ruffle assembly"/>
    <property type="evidence" value="ECO:0000250"/>
    <property type="project" value="UniProtKB"/>
</dbReference>
<dbReference type="GO" id="GO:0015031">
    <property type="term" value="P:protein transport"/>
    <property type="evidence" value="ECO:0007669"/>
    <property type="project" value="UniProtKB-KW"/>
</dbReference>
<dbReference type="CDD" id="cd13321">
    <property type="entry name" value="PH_PLEKHM1"/>
    <property type="match status" value="1"/>
</dbReference>
<dbReference type="CDD" id="cd17679">
    <property type="entry name" value="RUN_PLEKHM1"/>
    <property type="match status" value="1"/>
</dbReference>
<dbReference type="FunFam" id="1.20.58.900:FF:000013">
    <property type="entry name" value="pleckstrin homology domain-containing family M member 1 isoform X1"/>
    <property type="match status" value="1"/>
</dbReference>
<dbReference type="FunFam" id="2.30.29.30:FF:000315">
    <property type="entry name" value="pleckstrin homology domain-containing family M member 1 isoform X1"/>
    <property type="match status" value="1"/>
</dbReference>
<dbReference type="Gene3D" id="1.20.58.900">
    <property type="match status" value="1"/>
</dbReference>
<dbReference type="Gene3D" id="2.30.29.30">
    <property type="entry name" value="Pleckstrin-homology domain (PH domain)/Phosphotyrosine-binding domain (PTB)"/>
    <property type="match status" value="1"/>
</dbReference>
<dbReference type="InterPro" id="IPR051366">
    <property type="entry name" value="DEF8"/>
</dbReference>
<dbReference type="InterPro" id="IPR002219">
    <property type="entry name" value="PE/DAG-bd"/>
</dbReference>
<dbReference type="InterPro" id="IPR011993">
    <property type="entry name" value="PH-like_dom_sf"/>
</dbReference>
<dbReference type="InterPro" id="IPR001849">
    <property type="entry name" value="PH_domain"/>
</dbReference>
<dbReference type="InterPro" id="IPR042827">
    <property type="entry name" value="PLEKHM1_PH"/>
</dbReference>
<dbReference type="InterPro" id="IPR025258">
    <property type="entry name" value="RH_dom"/>
</dbReference>
<dbReference type="InterPro" id="IPR004012">
    <property type="entry name" value="Run_dom"/>
</dbReference>
<dbReference type="InterPro" id="IPR037213">
    <property type="entry name" value="Run_dom_sf"/>
</dbReference>
<dbReference type="InterPro" id="IPR047326">
    <property type="entry name" value="RUN_PLEKHM1"/>
</dbReference>
<dbReference type="PANTHER" id="PTHR12326">
    <property type="entry name" value="PLECKSTRIN HOMOLOGY DOMAIN CONTAINING PROTEIN"/>
    <property type="match status" value="1"/>
</dbReference>
<dbReference type="PANTHER" id="PTHR12326:SF5">
    <property type="entry name" value="PLECKSTRIN HOMOLOGY DOMAIN-CONTAINING FAMILY M MEMBER 1"/>
    <property type="match status" value="1"/>
</dbReference>
<dbReference type="Pfam" id="PF13901">
    <property type="entry name" value="RH_dom"/>
    <property type="match status" value="1"/>
</dbReference>
<dbReference type="Pfam" id="PF02759">
    <property type="entry name" value="RUN"/>
    <property type="match status" value="1"/>
</dbReference>
<dbReference type="SMART" id="SM00109">
    <property type="entry name" value="C1"/>
    <property type="match status" value="1"/>
</dbReference>
<dbReference type="SMART" id="SM01175">
    <property type="entry name" value="DUF4206"/>
    <property type="match status" value="1"/>
</dbReference>
<dbReference type="SMART" id="SM00233">
    <property type="entry name" value="PH"/>
    <property type="match status" value="2"/>
</dbReference>
<dbReference type="SMART" id="SM00593">
    <property type="entry name" value="RUN"/>
    <property type="match status" value="1"/>
</dbReference>
<dbReference type="SUPFAM" id="SSF50729">
    <property type="entry name" value="PH domain-like"/>
    <property type="match status" value="2"/>
</dbReference>
<dbReference type="SUPFAM" id="SSF140741">
    <property type="entry name" value="RUN domain-like"/>
    <property type="match status" value="1"/>
</dbReference>
<dbReference type="PROSITE" id="PS50003">
    <property type="entry name" value="PH_DOMAIN"/>
    <property type="match status" value="1"/>
</dbReference>
<dbReference type="PROSITE" id="PS50826">
    <property type="entry name" value="RUN"/>
    <property type="match status" value="1"/>
</dbReference>
<dbReference type="PROSITE" id="PS50081">
    <property type="entry name" value="ZF_DAG_PE_2"/>
    <property type="match status" value="1"/>
</dbReference>
<comment type="function">
    <text evidence="1 2 7 10 11 14">Acts as a multivalent adapter protein that regulates Rab7-dependent and HOPS complex-dependent fusion events in the endolysosomal system and couples autophagic and the endocytic trafficking pathways. Acts as a dual effector of RAB7A and ARL8B that simultaneously binds these GTPases, bringing about clustering and fusion of late endosomes and lysosomes (PubMed:25498145, PubMed:28325809). Required for late stages of endolysosomal maturation, facilitating both endocytosis-mediated degradation of growth factor receptors and autophagosome clearance. Interaction with Arl8b is a crucial factor in the terminal maturation of autophagosomes and to mediate autophagosome-lysosome fusion (PubMed:25498145). Positively regulates lysosome peripheral distribution and ruffled border formation in osteoclasts (By similarity). May be involved in negative regulation of endocytic transport from early endosome to late endosome/lysosome implicating its association with Rab7 (PubMed:20943950). May have a role in sialyl-lex-mediated transduction of apoptotic signals (PubMed:12820725). Involved in bone resorption (By similarity).</text>
</comment>
<comment type="function">
    <text evidence="12">(Microbial infection) In case of infection contributes to Salmonella typhimurium pathogenesis by supporting the integrity of the Salmonella-containing vacuole (SCV) probably in concert with the HOPS complex and Rab7.</text>
</comment>
<comment type="subunit">
    <text evidence="2 7 10 11 14">Interacts (via N- and C-terminus) with RAB7A (GTP-bound form) (PubMed:20943950, PubMed:25500191, PubMed:28325809). Simultaneously interacts with RAB7A and ARL8B; bringing about clustering and fusion of late endosomes and lysosomes (PubMed:28325809). Interacts (via RUN domain) with ARL8B (GTP-bound form); the interaction is required for PLEKHM1 localization to lysosomes and for ARL8B function in delivery and degradation of endocytic and autophagic cargo in lysosomes (PubMed:28325809). PLEKHM1 and PLEKHM2 compete for interaction with ARL8B (PubMed:28325809). Interacts with ARL8A; the interaction is weaker than with ARL8B (PubMed:28325809). Interacts with VPS41, VPS11, VPS18, VPS33A and VPS39; indicative for an association with the HOPS complex; the interactions with, at least, VPS41, VPS11, VPS18 and VPS33A require ARL8B (PubMed:25498145, PubMed:25500191, PubMed:28325809). Interacts with GABARAP, GABARAPL, GABARAPL2, MAP1LC3A, MAP1LC3B and MAP1LC3C (PubMed:25498145). Interacts with PAFAH1B (By similarity). Interacts (via N- and C-terminus) with NDEL1 (By similarity). Interacts (via C-terminus) with MAP3K7 (By similarity). Interacts (via N- and C-terminus) with FAM98A (By similarity). Interacts (via C-terminus) with DEF8; this interaction is weak but increased in a RAB7A-dependent manner (By similarity). In colon carcinoma and breast carcinoma cells, it interacts with sialyl-lex-positive protein (PubMed:12820725).</text>
</comment>
<comment type="subunit">
    <text evidence="12">(Microbial infection) Interacts with Salmonella typhimurium sifA.</text>
</comment>
<comment type="interaction">
    <interactant intactId="EBI-473814">
        <id>Q9Y4G2</id>
    </interactant>
    <interactant intactId="EBI-4401082">
        <id>Q96BM9</id>
        <label>ARL8A</label>
    </interactant>
    <organismsDiffer>false</organismsDiffer>
    <experiments>2</experiments>
</comment>
<comment type="interaction">
    <interactant intactId="EBI-473814">
        <id>Q9Y4G2</id>
    </interactant>
    <interactant intactId="EBI-718376">
        <id>Q9NVJ2</id>
        <label>ARL8B</label>
    </interactant>
    <organismsDiffer>false</organismsDiffer>
    <experiments>20</experiments>
</comment>
<comment type="interaction">
    <interactant intactId="EBI-473814">
        <id>Q9Y4G2</id>
    </interactant>
    <interactant intactId="EBI-712001">
        <id>O95166</id>
        <label>GABARAP</label>
    </interactant>
    <organismsDiffer>false</organismsDiffer>
    <experiments>2</experiments>
</comment>
<comment type="interaction">
    <interactant intactId="EBI-473814">
        <id>Q9Y4G2</id>
    </interactant>
    <interactant intactId="EBI-359260">
        <id>P42345</id>
        <label>MTOR</label>
    </interactant>
    <organismsDiffer>false</organismsDiffer>
    <experiments>6</experiments>
</comment>
<comment type="interaction">
    <interactant intactId="EBI-473814">
        <id>Q9Y4G2</id>
    </interactant>
    <interactant intactId="EBI-1056089">
        <id>P51149</id>
        <label>RAB7A</label>
    </interactant>
    <organismsDiffer>false</organismsDiffer>
    <experiments>11</experiments>
</comment>
<comment type="interaction">
    <interactant intactId="EBI-473814">
        <id>Q9Y4G2</id>
    </interactant>
    <interactant intactId="EBI-1050197">
        <id>Q96JC1</id>
        <label>VPS39</label>
    </interactant>
    <organismsDiffer>false</organismsDiffer>
    <experiments>5</experiments>
</comment>
<comment type="interaction">
    <interactant intactId="EBI-473814">
        <id>Q9Y4G2</id>
    </interactant>
    <interactant intactId="EBI-2130459">
        <id>P49754</id>
        <label>VPS41</label>
    </interactant>
    <organismsDiffer>false</organismsDiffer>
    <experiments>9</experiments>
</comment>
<comment type="interaction">
    <interactant intactId="EBI-473814">
        <id>Q9Y4G2</id>
    </interactant>
    <interactant intactId="EBI-7991906">
        <id>P18067</id>
        <label>RAB7A</label>
    </interactant>
    <organismsDiffer>true</organismsDiffer>
    <experiments>9</experiments>
</comment>
<comment type="interaction">
    <interactant intactId="EBI-473814">
        <id>Q9Y4G2</id>
    </interactant>
    <interactant intactId="EBI-30861778">
        <id>A0A0D6GID3</id>
        <label>sifA</label>
    </interactant>
    <organismsDiffer>true</organismsDiffer>
    <experiments>5</experiments>
</comment>
<comment type="subcellular location">
    <subcellularLocation>
        <location evidence="11">Autolysosome membrane</location>
    </subcellularLocation>
    <subcellularLocation>
        <location evidence="10">Endosome membrane</location>
    </subcellularLocation>
    <subcellularLocation>
        <location evidence="14">Late endosome membrane</location>
    </subcellularLocation>
    <subcellularLocation>
        <location evidence="11 12 14">Lysosome membrane</location>
    </subcellularLocation>
    <text evidence="11 12">In case of infection colocalizes with Salmonella typhimurium sifA in proximity of Salmonella-containing vacuole (SCV) (PubMed:25500191).</text>
</comment>
<comment type="tissue specificity">
    <text evidence="7 15">Expressed in placenta, liver, prostate, thymus, spleen, ovary, colon, colon carcinoma and peripheral blood lymphocytes (PBL). Weakly expressed in brain, lung, kidney, and testis. No expression in heart, skeletal muscle, pancreas and small intestine. Predominantly expressed in the breast carcinoma cell line MCF-7.</text>
</comment>
<comment type="domain">
    <text evidence="11">The LIR (LC3-interacting region) motif mediates the interaction with ATG8 family proteins GABARAP, GABARAPL, GABARAPL2, and LC3A/B/C.</text>
</comment>
<comment type="disease" evidence="8">
    <disease id="DI-01253">
        <name>Osteopetrosis, autosomal recessive 6</name>
        <acronym>OPTB6</acronym>
        <description>A rare genetic disease characterized by abnormally dense bone, due to defective resorption of immature bone. Osteopetrosis occurs in two forms: a severe autosomal recessive form occurring in utero, infancy, or childhood, and a benign autosomal dominant form occurring in adolescence or adulthood. Recessive osteopetrosis commonly manifests in early infancy with macrocephaly, feeding difficulties, evolving blindness and deafness, bone marrow failure, severe anemia, and hepatosplenomegaly. Deafness and blindness are generally thought to represent effects of pressure on nerves.</description>
        <dbReference type="MIM" id="611497"/>
    </disease>
    <text>The disease is caused by variants affecting the gene represented in this entry.</text>
</comment>
<comment type="disease" evidence="9 13">
    <disease id="DI-05323">
        <name>Osteopetrosis, autosomal dominant 3</name>
        <acronym>OPTA3</acronym>
        <description>A form of osteopetrosis, a rare genetic disease characterized by abnormally dense bone, due to defective resorption of immature bone. Osteopetrosis occurs in two forms: a severe autosomal recessive form occurring in utero, infancy, or childhood, and an autosomal dominant form occurring in adolescence or adulthood. OPTA3 is characterized by typical features of osteopetrosis such as fractures after minor trauma, early tooth loss, anemia, hepatosplenomegaly, and a generalized increase in bone mineral density. Some patients exhibit localized osteosclerosis and generalized osteopenia.</description>
        <dbReference type="MIM" id="618107"/>
    </disease>
    <text>The disease is caused by variants affecting the gene represented in this entry.</text>
</comment>
<comment type="miscellaneous">
    <text>Sialyl-lex is a carcinoma associated antigen.</text>
</comment>
<comment type="sequence caution" evidence="16">
    <conflict type="erroneous initiation">
        <sequence resource="EMBL-CDS" id="BAA20813"/>
    </conflict>
    <text>Extended N-terminus.</text>
</comment>
<comment type="sequence caution" evidence="16">
    <conflict type="erroneous initiation">
        <sequence resource="EMBL-CDS" id="CAB91652"/>
    </conflict>
    <text>Truncated N-terminus.</text>
</comment>
<feature type="chain" id="PRO_0000309335" description="Pleckstrin homology domain-containing family M member 1">
    <location>
        <begin position="1"/>
        <end position="1056"/>
    </location>
</feature>
<feature type="domain" description="RUN" evidence="4">
    <location>
        <begin position="41"/>
        <end position="183"/>
    </location>
</feature>
<feature type="domain" description="PH 1" evidence="3">
    <location>
        <begin position="534"/>
        <end position="625"/>
    </location>
</feature>
<feature type="domain" description="PH 2" evidence="3">
    <location>
        <begin position="683"/>
        <end position="777"/>
    </location>
</feature>
<feature type="zinc finger region" description="Phorbol-ester/DAG-type" evidence="5">
    <location>
        <begin position="986"/>
        <end position="1040"/>
    </location>
</feature>
<feature type="region of interest" description="Disordered" evidence="6">
    <location>
        <begin position="215"/>
        <end position="245"/>
    </location>
</feature>
<feature type="region of interest" description="Disordered" evidence="6">
    <location>
        <begin position="277"/>
        <end position="303"/>
    </location>
</feature>
<feature type="region of interest" description="Disordered" evidence="6">
    <location>
        <begin position="360"/>
        <end position="422"/>
    </location>
</feature>
<feature type="region of interest" description="Disordered" evidence="6">
    <location>
        <begin position="451"/>
        <end position="483"/>
    </location>
</feature>
<feature type="region of interest" description="Interaction with RAB7A" evidence="12">
    <location>
        <begin position="654"/>
        <end position="1056"/>
    </location>
</feature>
<feature type="short sequence motif" description="LIR" evidence="16">
    <location>
        <begin position="632"/>
        <end position="638"/>
    </location>
</feature>
<feature type="compositionally biased region" description="Polar residues" evidence="6">
    <location>
        <begin position="389"/>
        <end position="404"/>
    </location>
</feature>
<feature type="modified residue" description="Phosphoserine" evidence="2">
    <location>
        <position position="219"/>
    </location>
</feature>
<feature type="modified residue" description="Phosphoserine" evidence="18">
    <location>
        <position position="432"/>
    </location>
</feature>
<feature type="modified residue" description="Phosphoserine" evidence="2">
    <location>
        <position position="435"/>
    </location>
</feature>
<feature type="modified residue" description="Phosphoserine" evidence="2">
    <location>
        <position position="490"/>
    </location>
</feature>
<feature type="sequence variant" id="VAR_036932" description="In dbSNP:rs1859059.">
    <original>R</original>
    <variation>H</variation>
    <location>
        <position position="377"/>
    </location>
</feature>
<feature type="sequence variant" id="VAR_081102" description="In OPTA3; uncertain significance; dbSNP:rs559224144." evidence="9">
    <original>R</original>
    <variation>C</variation>
    <location>
        <position position="714"/>
    </location>
</feature>
<feature type="mutagenesis site" description="Strongly reduces interaction with ARL8B. No effect on interaction with RAB7A. No effect on late endosome and lysosome clustering. Loss of interaction with ARL8B as well as late endosome and lysosome clustering; when associated with 119-A--A-123." evidence="14">
    <original>H</original>
    <variation>A</variation>
    <location>
        <position position="60"/>
    </location>
</feature>
<feature type="mutagenesis site" description="No effect on interaction with ARL8B. No effect on interaction with RAB7A." evidence="14">
    <original>H</original>
    <variation>A</variation>
    <location>
        <position position="63"/>
    </location>
</feature>
<feature type="mutagenesis site" description="Reduces interaction with ARL8B. No effect on interaction with RAB7A. Loss of interaction with ARL8B as well as late endosome and lysosome clustering; when associated with A-60." evidence="14">
    <original>RAWLR</original>
    <variation>AAWLA</variation>
    <location>
        <begin position="119"/>
        <end position="123"/>
    </location>
</feature>
<feature type="mutagenesis site" description="Disrupts interaction with RAB7A." evidence="12">
    <location>
        <begin position="720"/>
        <end position="722"/>
    </location>
</feature>
<feature type="mutagenesis site" description="Disrupts interaction with RAB7A." evidence="12">
    <original>E</original>
    <variation>A</variation>
    <location>
        <position position="729"/>
    </location>
</feature>
<feature type="mutagenesis site" description="Disrupts interaction with RAB7A." evidence="12">
    <original>R</original>
    <variation>A</variation>
    <location>
        <position position="769"/>
    </location>
</feature>
<feature type="mutagenesis site" description="Disrupts interaction with Rab7 and no localization to endososmal membranes; when associated with G-1024, L-1029 and G-1032." evidence="10">
    <original>C</original>
    <variation>G</variation>
    <location>
        <position position="1021"/>
    </location>
</feature>
<feature type="mutagenesis site" description="Disrupts interaction with Rab7 and no localization to endososmal membranes; when associated with G-1021, L-1029 and G-1032." evidence="10">
    <original>C</original>
    <variation>G</variation>
    <location>
        <position position="1024"/>
    </location>
</feature>
<feature type="mutagenesis site" description="Disrupts interaction with Rab7 and no localization to endososmal membranes; when associated with G-1021, G-1024 and G-1032." evidence="10">
    <original>H</original>
    <variation>L</variation>
    <location>
        <position position="1029"/>
    </location>
</feature>
<feature type="mutagenesis site" description="Disrupts interaction with Rab7and no localization to endososmal membranes; when associated with G-1021, G-1024 and L-1029." evidence="10">
    <original>C</original>
    <variation>G</variation>
    <location>
        <position position="1032"/>
    </location>
</feature>
<feature type="sequence conflict" description="In Ref. 4; BAB84929." evidence="16" ref="4">
    <original>VVSSPTSP</original>
    <variation>GLRPVSAR</variation>
    <location>
        <begin position="429"/>
        <end position="436"/>
    </location>
</feature>
<feature type="sequence conflict" description="In Ref. 4; BAB84929." evidence="16" ref="4">
    <original>A</original>
    <variation>G</variation>
    <location>
        <position position="817"/>
    </location>
</feature>
<feature type="strand" evidence="19">
    <location>
        <begin position="635"/>
        <end position="637"/>
    </location>
</feature>
<gene>
    <name evidence="17" type="primary">PLEKHM1</name>
    <name type="synonym">KIAA0356</name>
</gene>
<proteinExistence type="evidence at protein level"/>
<keyword id="KW-0002">3D-structure</keyword>
<keyword id="KW-0072">Autophagy</keyword>
<keyword id="KW-0968">Cytoplasmic vesicle</keyword>
<keyword id="KW-0225">Disease variant</keyword>
<keyword id="KW-0967">Endosome</keyword>
<keyword id="KW-0458">Lysosome</keyword>
<keyword id="KW-0472">Membrane</keyword>
<keyword id="KW-0479">Metal-binding</keyword>
<keyword id="KW-0987">Osteopetrosis</keyword>
<keyword id="KW-0597">Phosphoprotein</keyword>
<keyword id="KW-0653">Protein transport</keyword>
<keyword id="KW-1267">Proteomics identification</keyword>
<keyword id="KW-1185">Reference proteome</keyword>
<keyword id="KW-0677">Repeat</keyword>
<keyword id="KW-0813">Transport</keyword>
<keyword id="KW-0862">Zinc</keyword>
<keyword id="KW-0863">Zinc-finger</keyword>
<name>PKHM1_HUMAN</name>